<name>RECO_NOCFA</name>
<feature type="chain" id="PRO_0000204976" description="DNA repair protein RecO">
    <location>
        <begin position="1"/>
        <end position="256"/>
    </location>
</feature>
<dbReference type="EMBL" id="AP006618">
    <property type="protein sequence ID" value="BAD56297.1"/>
    <property type="molecule type" value="Genomic_DNA"/>
</dbReference>
<dbReference type="RefSeq" id="WP_011207982.1">
    <property type="nucleotide sequence ID" value="NC_006361.1"/>
</dbReference>
<dbReference type="SMR" id="Q5YZU4"/>
<dbReference type="STRING" id="247156.NFA_14520"/>
<dbReference type="GeneID" id="61132267"/>
<dbReference type="KEGG" id="nfa:NFA_14520"/>
<dbReference type="eggNOG" id="COG1381">
    <property type="taxonomic scope" value="Bacteria"/>
</dbReference>
<dbReference type="HOGENOM" id="CLU_066632_1_1_11"/>
<dbReference type="OrthoDB" id="9812244at2"/>
<dbReference type="Proteomes" id="UP000006820">
    <property type="component" value="Chromosome"/>
</dbReference>
<dbReference type="GO" id="GO:0043590">
    <property type="term" value="C:bacterial nucleoid"/>
    <property type="evidence" value="ECO:0007669"/>
    <property type="project" value="TreeGrafter"/>
</dbReference>
<dbReference type="GO" id="GO:0006310">
    <property type="term" value="P:DNA recombination"/>
    <property type="evidence" value="ECO:0007669"/>
    <property type="project" value="UniProtKB-UniRule"/>
</dbReference>
<dbReference type="GO" id="GO:0006302">
    <property type="term" value="P:double-strand break repair"/>
    <property type="evidence" value="ECO:0007669"/>
    <property type="project" value="TreeGrafter"/>
</dbReference>
<dbReference type="Gene3D" id="2.40.50.140">
    <property type="entry name" value="Nucleic acid-binding proteins"/>
    <property type="match status" value="1"/>
</dbReference>
<dbReference type="Gene3D" id="1.20.1440.120">
    <property type="entry name" value="Recombination protein O, C-terminal domain"/>
    <property type="match status" value="1"/>
</dbReference>
<dbReference type="HAMAP" id="MF_00201">
    <property type="entry name" value="RecO"/>
    <property type="match status" value="1"/>
</dbReference>
<dbReference type="InterPro" id="IPR037278">
    <property type="entry name" value="ARFGAP/RecO"/>
</dbReference>
<dbReference type="InterPro" id="IPR022572">
    <property type="entry name" value="DNA_rep/recomb_RecO_N"/>
</dbReference>
<dbReference type="InterPro" id="IPR012340">
    <property type="entry name" value="NA-bd_OB-fold"/>
</dbReference>
<dbReference type="InterPro" id="IPR003717">
    <property type="entry name" value="RecO"/>
</dbReference>
<dbReference type="InterPro" id="IPR042242">
    <property type="entry name" value="RecO_C"/>
</dbReference>
<dbReference type="NCBIfam" id="TIGR00613">
    <property type="entry name" value="reco"/>
    <property type="match status" value="1"/>
</dbReference>
<dbReference type="PANTHER" id="PTHR33991">
    <property type="entry name" value="DNA REPAIR PROTEIN RECO"/>
    <property type="match status" value="1"/>
</dbReference>
<dbReference type="PANTHER" id="PTHR33991:SF1">
    <property type="entry name" value="DNA REPAIR PROTEIN RECO"/>
    <property type="match status" value="1"/>
</dbReference>
<dbReference type="Pfam" id="PF02565">
    <property type="entry name" value="RecO_C"/>
    <property type="match status" value="1"/>
</dbReference>
<dbReference type="Pfam" id="PF11967">
    <property type="entry name" value="RecO_N"/>
    <property type="match status" value="1"/>
</dbReference>
<dbReference type="SUPFAM" id="SSF57863">
    <property type="entry name" value="ArfGap/RecO-like zinc finger"/>
    <property type="match status" value="1"/>
</dbReference>
<dbReference type="SUPFAM" id="SSF50249">
    <property type="entry name" value="Nucleic acid-binding proteins"/>
    <property type="match status" value="1"/>
</dbReference>
<gene>
    <name evidence="1" type="primary">recO</name>
    <name type="ordered locus">NFA_14520</name>
</gene>
<proteinExistence type="inferred from homology"/>
<protein>
    <recommendedName>
        <fullName evidence="1">DNA repair protein RecO</fullName>
    </recommendedName>
    <alternativeName>
        <fullName evidence="1">Recombination protein O</fullName>
    </alternativeName>
</protein>
<organism>
    <name type="scientific">Nocardia farcinica (strain IFM 10152)</name>
    <dbReference type="NCBI Taxonomy" id="247156"/>
    <lineage>
        <taxon>Bacteria</taxon>
        <taxon>Bacillati</taxon>
        <taxon>Actinomycetota</taxon>
        <taxon>Actinomycetes</taxon>
        <taxon>Mycobacteriales</taxon>
        <taxon>Nocardiaceae</taxon>
        <taxon>Nocardia</taxon>
    </lineage>
</organism>
<evidence type="ECO:0000255" key="1">
    <source>
        <dbReference type="HAMAP-Rule" id="MF_00201"/>
    </source>
</evidence>
<reference key="1">
    <citation type="journal article" date="2004" name="Proc. Natl. Acad. Sci. U.S.A.">
        <title>The complete genomic sequence of Nocardia farcinica IFM 10152.</title>
        <authorList>
            <person name="Ishikawa J."/>
            <person name="Yamashita A."/>
            <person name="Mikami Y."/>
            <person name="Hoshino Y."/>
            <person name="Kurita H."/>
            <person name="Hotta K."/>
            <person name="Shiba T."/>
            <person name="Hattori M."/>
        </authorList>
    </citation>
    <scope>NUCLEOTIDE SEQUENCE [LARGE SCALE GENOMIC DNA]</scope>
    <source>
        <strain>IFM 10152</strain>
    </source>
</reference>
<keyword id="KW-0227">DNA damage</keyword>
<keyword id="KW-0233">DNA recombination</keyword>
<keyword id="KW-0234">DNA repair</keyword>
<keyword id="KW-1185">Reference proteome</keyword>
<accession>Q5YZU4</accession>
<sequence>MRLYRDEAVVVRQHKLGEADRIVTLLTRQHGLVRAVAKGVRRTRSRFGARLEPFSYIDVQLHPGRNLDTVTQVHTVESFAADIIDDYGRYTTACAILETAERLAGEERAPAPKLHALTASALRAIAAKQRPHELVLDAYLLRAMRFAGWAPALDECAKCATPGPHRAFHVAAGGAVCVHCRPPGAATPAPGVLDHLVALARGEWAGIEAVPESTRKQASGLVAAHLQWHLERQLRTLPLIERSGPARDAATAGHAG</sequence>
<comment type="function">
    <text evidence="1">Involved in DNA repair and RecF pathway recombination.</text>
</comment>
<comment type="similarity">
    <text evidence="1">Belongs to the RecO family.</text>
</comment>